<proteinExistence type="evidence at protein level"/>
<comment type="function">
    <text evidence="4">Desaturase involved in fatty acid biosynthesis (PubMed:16689682). Introduces a double bond at carbon 9 of palmitoyl groups (16:0) attached to the sn-2 position of the glycerol moiety of membrane glycerolipids (PubMed:16689682).</text>
</comment>
<comment type="catalytic activity">
    <reaction evidence="4">
        <text>a 1-acyl-2-hexadecanoyl-glycerolipid + 2 reduced [2Fe-2S]-[ferredoxin] + O2 + 2 H(+) = a 1-acyl-2-[(9Z)-hexadecenoyl]-glycerolipid + 2 oxidized [2Fe-2S]-[ferredoxin] + 2 H2O</text>
        <dbReference type="Rhea" id="RHEA:46768"/>
        <dbReference type="Rhea" id="RHEA-COMP:10000"/>
        <dbReference type="Rhea" id="RHEA-COMP:10001"/>
        <dbReference type="ChEBI" id="CHEBI:15377"/>
        <dbReference type="ChEBI" id="CHEBI:15378"/>
        <dbReference type="ChEBI" id="CHEBI:15379"/>
        <dbReference type="ChEBI" id="CHEBI:33737"/>
        <dbReference type="ChEBI" id="CHEBI:33738"/>
        <dbReference type="ChEBI" id="CHEBI:86999"/>
        <dbReference type="ChEBI" id="CHEBI:87003"/>
        <dbReference type="EC" id="1.14.19.27"/>
    </reaction>
    <physiologicalReaction direction="left-to-right" evidence="4">
        <dbReference type="Rhea" id="RHEA:46769"/>
    </physiologicalReaction>
</comment>
<comment type="cofactor">
    <cofactor evidence="1">
        <name>Fe(2+)</name>
        <dbReference type="ChEBI" id="CHEBI:29033"/>
    </cofactor>
</comment>
<comment type="pathway">
    <text evidence="4">Lipid metabolism; fatty acid biosynthesis.</text>
</comment>
<comment type="subcellular location">
    <subcellularLocation>
        <location evidence="3">Membrane</location>
        <topology evidence="3">Multi-pass membrane protein</topology>
    </subcellularLocation>
</comment>
<comment type="induction">
    <text evidence="5">Constitutively expressed at low temperature.</text>
</comment>
<comment type="domain">
    <text evidence="1">The histidine box domains are involved in binding the catalytic metal ions.</text>
</comment>
<comment type="similarity">
    <text evidence="7">Belongs to the fatty acid desaturase type 2 family.</text>
</comment>
<organism>
    <name type="scientific">Nostoc sp. (strain 36)</name>
    <dbReference type="NCBI Taxonomy" id="261476"/>
    <lineage>
        <taxon>Bacteria</taxon>
        <taxon>Bacillati</taxon>
        <taxon>Cyanobacteriota</taxon>
        <taxon>Cyanophyceae</taxon>
        <taxon>Nostocales</taxon>
        <taxon>Nostocaceae</taxon>
        <taxon>Nostoc</taxon>
    </lineage>
</organism>
<dbReference type="EC" id="1.14.19.27" evidence="4"/>
<dbReference type="EMBL" id="AJ621247">
    <property type="protein sequence ID" value="CAF18426.1"/>
    <property type="molecule type" value="Genomic_DNA"/>
</dbReference>
<dbReference type="SMR" id="Q704E9"/>
<dbReference type="KEGG" id="ag:CAF18426"/>
<dbReference type="BioCyc" id="MetaCyc:MONOMER-16973"/>
<dbReference type="BRENDA" id="1.14.19.27">
    <property type="organism ID" value="4371"/>
</dbReference>
<dbReference type="UniPathway" id="UPA00094"/>
<dbReference type="GO" id="GO:0016020">
    <property type="term" value="C:membrane"/>
    <property type="evidence" value="ECO:0007669"/>
    <property type="project" value="UniProtKB-SubCell"/>
</dbReference>
<dbReference type="GO" id="GO:0016717">
    <property type="term" value="F:oxidoreductase activity, acting on paired donors, with oxidation of a pair of donors resulting in the reduction of molecular oxygen to two molecules of water"/>
    <property type="evidence" value="ECO:0007669"/>
    <property type="project" value="InterPro"/>
</dbReference>
<dbReference type="GO" id="GO:0006633">
    <property type="term" value="P:fatty acid biosynthetic process"/>
    <property type="evidence" value="ECO:0007669"/>
    <property type="project" value="UniProtKB-UniPathway"/>
</dbReference>
<dbReference type="CDD" id="cd03505">
    <property type="entry name" value="Delta9-FADS-like"/>
    <property type="match status" value="1"/>
</dbReference>
<dbReference type="InterPro" id="IPR015876">
    <property type="entry name" value="Acyl-CoA_DS"/>
</dbReference>
<dbReference type="InterPro" id="IPR005804">
    <property type="entry name" value="FA_desaturase_dom"/>
</dbReference>
<dbReference type="PANTHER" id="PTHR11351">
    <property type="entry name" value="ACYL-COA DESATURASE"/>
    <property type="match status" value="1"/>
</dbReference>
<dbReference type="PANTHER" id="PTHR11351:SF31">
    <property type="entry name" value="DESATURASE 1, ISOFORM A-RELATED"/>
    <property type="match status" value="1"/>
</dbReference>
<dbReference type="Pfam" id="PF00487">
    <property type="entry name" value="FA_desaturase"/>
    <property type="match status" value="1"/>
</dbReference>
<dbReference type="PRINTS" id="PR00075">
    <property type="entry name" value="FACDDSATRASE"/>
</dbReference>
<keyword id="KW-0275">Fatty acid biosynthesis</keyword>
<keyword id="KW-0276">Fatty acid metabolism</keyword>
<keyword id="KW-0408">Iron</keyword>
<keyword id="KW-0444">Lipid biosynthesis</keyword>
<keyword id="KW-0443">Lipid metabolism</keyword>
<keyword id="KW-0472">Membrane</keyword>
<keyword id="KW-0560">Oxidoreductase</keyword>
<keyword id="KW-0812">Transmembrane</keyword>
<keyword id="KW-1133">Transmembrane helix</keyword>
<accession>Q704E9</accession>
<feature type="chain" id="PRO_0000459797" description="sn-2 palmitoyl-lipid 9-desaturase">
    <location>
        <begin position="1"/>
        <end position="285"/>
    </location>
</feature>
<feature type="transmembrane region" description="Helical" evidence="3">
    <location>
        <begin position="20"/>
        <end position="40"/>
    </location>
</feature>
<feature type="transmembrane region" description="Helical" evidence="3">
    <location>
        <begin position="44"/>
        <end position="64"/>
    </location>
</feature>
<feature type="transmembrane region" description="Helical" evidence="3">
    <location>
        <begin position="81"/>
        <end position="101"/>
    </location>
</feature>
<feature type="transmembrane region" description="Helical" evidence="3">
    <location>
        <begin position="169"/>
        <end position="189"/>
    </location>
</feature>
<feature type="short sequence motif" description="Histidine box-1" evidence="2">
    <location>
        <begin position="65"/>
        <end position="70"/>
    </location>
</feature>
<feature type="short sequence motif" description="Histidine box-2" evidence="2">
    <location>
        <begin position="102"/>
        <end position="106"/>
    </location>
</feature>
<feature type="short sequence motif" description="Histidine box-3" evidence="2">
    <location>
        <begin position="239"/>
        <end position="243"/>
    </location>
</feature>
<sequence length="285" mass="33239">MTANFGAIAPERGNSPQLRWINVVFFGVFHALALLSPWFFSWSALGLLVFLHWLFGSIGICLGYHRLLSHKSFQVPKWLEYAIALIGALALQGGPIFWVGGHRQHHAHTEDIDLDPYSAQKGFWWSHILWIFYPRPEFFDYDTYKKYAPDLARQPFYCWLDRYFLLLQIPFALLLYVLGGWPFVFYGVFLRCVLLWHSTWFVNSASHLWGYRTFDADDGARNLWWVSIVTYGEGWHNNHHTYPHMAKSGLFWWEIDVTWWSIQLLQTLGLAKKVVSSPPQGATHG</sequence>
<evidence type="ECO:0000250" key="1">
    <source>
        <dbReference type="UniProtKB" id="O00767"/>
    </source>
</evidence>
<evidence type="ECO:0000250" key="2">
    <source>
        <dbReference type="UniProtKB" id="Q54795"/>
    </source>
</evidence>
<evidence type="ECO:0000255" key="3"/>
<evidence type="ECO:0000269" key="4">
    <source>
    </source>
</evidence>
<evidence type="ECO:0000269" key="5">
    <source>
    </source>
</evidence>
<evidence type="ECO:0000303" key="6">
    <source>
    </source>
</evidence>
<evidence type="ECO:0000305" key="7"/>
<reference key="1">
    <citation type="journal article" date="2006" name="Biochem. J.">
        <title>A novel Delta9 acyl-lipid desaturase, DesC2, from cyanobacteria acts on fatty acids esterified to the sn-2 position of glycerolipids.</title>
        <authorList>
            <person name="Chintalapati S."/>
            <person name="Prakash J.S."/>
            <person name="Gupta P."/>
            <person name="Ohtani S."/>
            <person name="Suzuki I."/>
            <person name="Sakamoto T."/>
            <person name="Murata N."/>
            <person name="Shivaji S."/>
        </authorList>
    </citation>
    <scope>NUCLEOTIDE SEQUENCE [GENOMIC DNA]</scope>
    <scope>FUNCTION</scope>
    <scope>CATALYTIC ACTIVITY</scope>
    <scope>PATHWAY</scope>
    <source>
        <strain>36</strain>
    </source>
</reference>
<reference key="2">
    <citation type="journal article" date="2007" name="Biochem. Biophys. Res. Commun.">
        <title>Desaturase genes in a psychrotolerant Nostoc sp. are constitutively expressed at low temperature.</title>
        <authorList>
            <person name="Chintalapati S."/>
            <person name="Prakash J.S.S."/>
            <person name="Singh A.K."/>
            <person name="Ohtani S."/>
            <person name="Suzuki I."/>
            <person name="Murata N."/>
            <person name="Shivaji S."/>
        </authorList>
    </citation>
    <scope>TRANSCRIPTIONAL REGULATION</scope>
    <source>
        <strain>36</strain>
    </source>
</reference>
<gene>
    <name evidence="6" type="primary">desC2</name>
</gene>
<name>DESC2_NOSS3</name>
<protein>
    <recommendedName>
        <fullName evidence="7">sn-2 palmitoyl-lipid 9-desaturase</fullName>
        <ecNumber evidence="4">1.14.19.27</ecNumber>
    </recommendedName>
    <alternativeName>
        <fullName evidence="7">Delta(9)-fatty-acid desaturase</fullName>
    </alternativeName>
    <alternativeName>
        <fullName evidence="6">Delta-9 acyl-lipid desaturase</fullName>
    </alternativeName>
</protein>